<accession>A8GCJ5</accession>
<comment type="catalytic activity">
    <reaction evidence="1">
        <text>tRNA(Asn) + L-asparagine + ATP = L-asparaginyl-tRNA(Asn) + AMP + diphosphate + H(+)</text>
        <dbReference type="Rhea" id="RHEA:11180"/>
        <dbReference type="Rhea" id="RHEA-COMP:9659"/>
        <dbReference type="Rhea" id="RHEA-COMP:9674"/>
        <dbReference type="ChEBI" id="CHEBI:15378"/>
        <dbReference type="ChEBI" id="CHEBI:30616"/>
        <dbReference type="ChEBI" id="CHEBI:33019"/>
        <dbReference type="ChEBI" id="CHEBI:58048"/>
        <dbReference type="ChEBI" id="CHEBI:78442"/>
        <dbReference type="ChEBI" id="CHEBI:78515"/>
        <dbReference type="ChEBI" id="CHEBI:456215"/>
        <dbReference type="EC" id="6.1.1.22"/>
    </reaction>
</comment>
<comment type="subunit">
    <text evidence="1">Homodimer.</text>
</comment>
<comment type="subcellular location">
    <subcellularLocation>
        <location evidence="1">Cytoplasm</location>
    </subcellularLocation>
</comment>
<comment type="similarity">
    <text evidence="1">Belongs to the class-II aminoacyl-tRNA synthetase family.</text>
</comment>
<dbReference type="EC" id="6.1.1.22" evidence="1"/>
<dbReference type="EMBL" id="CP000826">
    <property type="protein sequence ID" value="ABV40835.1"/>
    <property type="molecule type" value="Genomic_DNA"/>
</dbReference>
<dbReference type="SMR" id="A8GCJ5"/>
<dbReference type="STRING" id="399741.Spro_1731"/>
<dbReference type="KEGG" id="spe:Spro_1731"/>
<dbReference type="eggNOG" id="COG0017">
    <property type="taxonomic scope" value="Bacteria"/>
</dbReference>
<dbReference type="HOGENOM" id="CLU_004553_2_0_6"/>
<dbReference type="OrthoDB" id="9762036at2"/>
<dbReference type="GO" id="GO:0005737">
    <property type="term" value="C:cytoplasm"/>
    <property type="evidence" value="ECO:0007669"/>
    <property type="project" value="UniProtKB-SubCell"/>
</dbReference>
<dbReference type="GO" id="GO:0004816">
    <property type="term" value="F:asparagine-tRNA ligase activity"/>
    <property type="evidence" value="ECO:0007669"/>
    <property type="project" value="UniProtKB-UniRule"/>
</dbReference>
<dbReference type="GO" id="GO:0005524">
    <property type="term" value="F:ATP binding"/>
    <property type="evidence" value="ECO:0007669"/>
    <property type="project" value="UniProtKB-UniRule"/>
</dbReference>
<dbReference type="GO" id="GO:0003676">
    <property type="term" value="F:nucleic acid binding"/>
    <property type="evidence" value="ECO:0007669"/>
    <property type="project" value="InterPro"/>
</dbReference>
<dbReference type="GO" id="GO:0006421">
    <property type="term" value="P:asparaginyl-tRNA aminoacylation"/>
    <property type="evidence" value="ECO:0007669"/>
    <property type="project" value="UniProtKB-UniRule"/>
</dbReference>
<dbReference type="CDD" id="cd00776">
    <property type="entry name" value="AsxRS_core"/>
    <property type="match status" value="1"/>
</dbReference>
<dbReference type="CDD" id="cd04318">
    <property type="entry name" value="EcAsnRS_like_N"/>
    <property type="match status" value="1"/>
</dbReference>
<dbReference type="FunFam" id="3.30.930.10:FF:000016">
    <property type="entry name" value="Asparagine--tRNA ligase"/>
    <property type="match status" value="1"/>
</dbReference>
<dbReference type="Gene3D" id="3.30.930.10">
    <property type="entry name" value="Bira Bifunctional Protein, Domain 2"/>
    <property type="match status" value="1"/>
</dbReference>
<dbReference type="Gene3D" id="2.40.50.140">
    <property type="entry name" value="Nucleic acid-binding proteins"/>
    <property type="match status" value="1"/>
</dbReference>
<dbReference type="HAMAP" id="MF_00534">
    <property type="entry name" value="Asn_tRNA_synth"/>
    <property type="match status" value="1"/>
</dbReference>
<dbReference type="InterPro" id="IPR004364">
    <property type="entry name" value="Aa-tRNA-synt_II"/>
</dbReference>
<dbReference type="InterPro" id="IPR006195">
    <property type="entry name" value="aa-tRNA-synth_II"/>
</dbReference>
<dbReference type="InterPro" id="IPR045864">
    <property type="entry name" value="aa-tRNA-synth_II/BPL/LPL"/>
</dbReference>
<dbReference type="InterPro" id="IPR004522">
    <property type="entry name" value="Asn-tRNA-ligase"/>
</dbReference>
<dbReference type="InterPro" id="IPR002312">
    <property type="entry name" value="Asp/Asn-tRNA-synth_IIb"/>
</dbReference>
<dbReference type="InterPro" id="IPR012340">
    <property type="entry name" value="NA-bd_OB-fold"/>
</dbReference>
<dbReference type="InterPro" id="IPR004365">
    <property type="entry name" value="NA-bd_OB_tRNA"/>
</dbReference>
<dbReference type="NCBIfam" id="TIGR00457">
    <property type="entry name" value="asnS"/>
    <property type="match status" value="1"/>
</dbReference>
<dbReference type="NCBIfam" id="NF003037">
    <property type="entry name" value="PRK03932.1"/>
    <property type="match status" value="1"/>
</dbReference>
<dbReference type="PANTHER" id="PTHR22594:SF34">
    <property type="entry name" value="ASPARAGINE--TRNA LIGASE, MITOCHONDRIAL-RELATED"/>
    <property type="match status" value="1"/>
</dbReference>
<dbReference type="PANTHER" id="PTHR22594">
    <property type="entry name" value="ASPARTYL/LYSYL-TRNA SYNTHETASE"/>
    <property type="match status" value="1"/>
</dbReference>
<dbReference type="Pfam" id="PF00152">
    <property type="entry name" value="tRNA-synt_2"/>
    <property type="match status" value="1"/>
</dbReference>
<dbReference type="Pfam" id="PF01336">
    <property type="entry name" value="tRNA_anti-codon"/>
    <property type="match status" value="1"/>
</dbReference>
<dbReference type="PRINTS" id="PR01042">
    <property type="entry name" value="TRNASYNTHASP"/>
</dbReference>
<dbReference type="SUPFAM" id="SSF55681">
    <property type="entry name" value="Class II aaRS and biotin synthetases"/>
    <property type="match status" value="1"/>
</dbReference>
<dbReference type="SUPFAM" id="SSF50249">
    <property type="entry name" value="Nucleic acid-binding proteins"/>
    <property type="match status" value="1"/>
</dbReference>
<dbReference type="PROSITE" id="PS50862">
    <property type="entry name" value="AA_TRNA_LIGASE_II"/>
    <property type="match status" value="1"/>
</dbReference>
<gene>
    <name evidence="1" type="primary">asnS</name>
    <name type="ordered locus">Spro_1731</name>
</gene>
<feature type="chain" id="PRO_1000061024" description="Asparagine--tRNA ligase">
    <location>
        <begin position="1"/>
        <end position="466"/>
    </location>
</feature>
<reference key="1">
    <citation type="submission" date="2007-09" db="EMBL/GenBank/DDBJ databases">
        <title>Complete sequence of chromosome of Serratia proteamaculans 568.</title>
        <authorList>
            <consortium name="US DOE Joint Genome Institute"/>
            <person name="Copeland A."/>
            <person name="Lucas S."/>
            <person name="Lapidus A."/>
            <person name="Barry K."/>
            <person name="Glavina del Rio T."/>
            <person name="Dalin E."/>
            <person name="Tice H."/>
            <person name="Pitluck S."/>
            <person name="Chain P."/>
            <person name="Malfatti S."/>
            <person name="Shin M."/>
            <person name="Vergez L."/>
            <person name="Schmutz J."/>
            <person name="Larimer F."/>
            <person name="Land M."/>
            <person name="Hauser L."/>
            <person name="Kyrpides N."/>
            <person name="Kim E."/>
            <person name="Taghavi S."/>
            <person name="Newman L."/>
            <person name="Vangronsveld J."/>
            <person name="van der Lelie D."/>
            <person name="Richardson P."/>
        </authorList>
    </citation>
    <scope>NUCLEOTIDE SEQUENCE [LARGE SCALE GENOMIC DNA]</scope>
    <source>
        <strain>568</strain>
    </source>
</reference>
<organism>
    <name type="scientific">Serratia proteamaculans (strain 568)</name>
    <dbReference type="NCBI Taxonomy" id="399741"/>
    <lineage>
        <taxon>Bacteria</taxon>
        <taxon>Pseudomonadati</taxon>
        <taxon>Pseudomonadota</taxon>
        <taxon>Gammaproteobacteria</taxon>
        <taxon>Enterobacterales</taxon>
        <taxon>Yersiniaceae</taxon>
        <taxon>Serratia</taxon>
    </lineage>
</organism>
<protein>
    <recommendedName>
        <fullName evidence="1">Asparagine--tRNA ligase</fullName>
        <ecNumber evidence="1">6.1.1.22</ecNumber>
    </recommendedName>
    <alternativeName>
        <fullName evidence="1">Asparaginyl-tRNA synthetase</fullName>
        <shortName evidence="1">AsnRS</shortName>
    </alternativeName>
</protein>
<name>SYN_SERP5</name>
<proteinExistence type="inferred from homology"/>
<keyword id="KW-0030">Aminoacyl-tRNA synthetase</keyword>
<keyword id="KW-0067">ATP-binding</keyword>
<keyword id="KW-0963">Cytoplasm</keyword>
<keyword id="KW-0436">Ligase</keyword>
<keyword id="KW-0547">Nucleotide-binding</keyword>
<keyword id="KW-0648">Protein biosynthesis</keyword>
<evidence type="ECO:0000255" key="1">
    <source>
        <dbReference type="HAMAP-Rule" id="MF_00534"/>
    </source>
</evidence>
<sequence length="466" mass="52400">MSVVPVVDVLQGRAAVDSEVTVRGWVRTRRDSKAGISFLAVYDGSCFDPLQAVVNNSLPNYQDEVLHLTTGCSIEVTGVVVASPGEGQSFELQATAIKVVGWVDDPDTYPMAAKRHSIEYLREVAHLRPRTNLIGAVARVRHTLAQAIHRFYHENGFFWVSTPLITASDTEGAGEMFRVSTLDLENLPRTDKGAVDFSQDFFGKEAFLTVSGQLNGETYACALSKIYTFGPTFRAENSNTSRHLAEFWMIEPEVAFADLEDIAELAEKMLKYVFQAVLNERMDDMQFFAERVDKDAIDRLQRFVTSDFAQVDYTEAVEILIASGQTFENPVSWGIDLSSEHERYLAEKHFKAPVVVKNYPKDIKAFYMRMNDDGKTVAAMDVLAPGIGEIIGGAQREERLDVLDQRLEAMGLNKEDYWWYRDLRRYGTVPHAGFGLGFERLIAYVTGVQNVRDVIPFPRTPRNATF</sequence>